<proteinExistence type="inferred from homology"/>
<organism>
    <name type="scientific">Chlamydia trachomatis serovar D (strain ATCC VR-885 / DSM 19411 / UW-3/Cx)</name>
    <dbReference type="NCBI Taxonomy" id="272561"/>
    <lineage>
        <taxon>Bacteria</taxon>
        <taxon>Pseudomonadati</taxon>
        <taxon>Chlamydiota</taxon>
        <taxon>Chlamydiia</taxon>
        <taxon>Chlamydiales</taxon>
        <taxon>Chlamydiaceae</taxon>
        <taxon>Chlamydia/Chlamydophila group</taxon>
        <taxon>Chlamydia</taxon>
    </lineage>
</organism>
<accession>O84480</accession>
<keyword id="KW-0472">Membrane</keyword>
<keyword id="KW-1185">Reference proteome</keyword>
<keyword id="KW-0812">Transmembrane</keyword>
<keyword id="KW-1133">Transmembrane helix</keyword>
<evidence type="ECO:0000255" key="1"/>
<evidence type="ECO:0000305" key="2"/>
<name>Y474_CHLTR</name>
<dbReference type="EMBL" id="AE001273">
    <property type="protein sequence ID" value="AAC68074.2"/>
    <property type="molecule type" value="Genomic_DNA"/>
</dbReference>
<dbReference type="PIR" id="G71509">
    <property type="entry name" value="G71509"/>
</dbReference>
<dbReference type="RefSeq" id="NP_219987.1">
    <property type="nucleotide sequence ID" value="NC_000117.1"/>
</dbReference>
<dbReference type="RefSeq" id="WP_010725207.1">
    <property type="nucleotide sequence ID" value="NC_000117.1"/>
</dbReference>
<dbReference type="STRING" id="272561.CT_474"/>
<dbReference type="EnsemblBacteria" id="AAC68074">
    <property type="protein sequence ID" value="AAC68074"/>
    <property type="gene ID" value="CT_474"/>
</dbReference>
<dbReference type="GeneID" id="884250"/>
<dbReference type="KEGG" id="ctr:CT_474"/>
<dbReference type="PATRIC" id="fig|272561.5.peg.513"/>
<dbReference type="HOGENOM" id="CLU_766615_0_0_0"/>
<dbReference type="InParanoid" id="O84480"/>
<dbReference type="OrthoDB" id="17478at2"/>
<dbReference type="Proteomes" id="UP000000431">
    <property type="component" value="Chromosome"/>
</dbReference>
<dbReference type="GO" id="GO:0016020">
    <property type="term" value="C:membrane"/>
    <property type="evidence" value="ECO:0007669"/>
    <property type="project" value="UniProtKB-SubCell"/>
</dbReference>
<comment type="subcellular location">
    <subcellularLocation>
        <location evidence="2">Membrane</location>
        <topology evidence="2">Single-pass membrane protein</topology>
    </subcellularLocation>
</comment>
<comment type="similarity">
    <text evidence="2">Belongs to the chlamydial CPn_0593/CT_474/TC_0759 family.</text>
</comment>
<feature type="chain" id="PRO_0000218402" description="Uncharacterized protein CT_474">
    <location>
        <begin position="1"/>
        <end position="309"/>
    </location>
</feature>
<feature type="transmembrane region" description="Helical" evidence="1">
    <location>
        <begin position="23"/>
        <end position="43"/>
    </location>
</feature>
<protein>
    <recommendedName>
        <fullName>Uncharacterized protein CT_474</fullName>
    </recommendedName>
</protein>
<reference key="1">
    <citation type="journal article" date="1998" name="Science">
        <title>Genome sequence of an obligate intracellular pathogen of humans: Chlamydia trachomatis.</title>
        <authorList>
            <person name="Stephens R.S."/>
            <person name="Kalman S."/>
            <person name="Lammel C.J."/>
            <person name="Fan J."/>
            <person name="Marathe R."/>
            <person name="Aravind L."/>
            <person name="Mitchell W.P."/>
            <person name="Olinger L."/>
            <person name="Tatusov R.L."/>
            <person name="Zhao Q."/>
            <person name="Koonin E.V."/>
            <person name="Davis R.W."/>
        </authorList>
    </citation>
    <scope>NUCLEOTIDE SEQUENCE [LARGE SCALE GENOMIC DNA]</scope>
    <source>
        <strain>ATCC VR-885 / DSM 19411 / UW-3/Cx</strain>
    </source>
</reference>
<sequence length="309" mass="35412">MGIEGRGSGAMQSKKTIKWLKQALVLSSIVNILLLLLIYSTVFRKDIYKLRVFPGNLIAKSSRIGKIPEDILERLENASFADLLALLQEERMVFGHPLKSWALGVSIQKYFVDIAPMLTHPLTFIRLKSPERTWLLPDINDQEFTRICQYLLTERFPFSSRGFFRIMVRDCEAGMVDEDVLYRFCHLPEFLYVRSLLFGAEIEAASVASLARMIIQGGEDLFFSLCCLENRQTAISDHQRRCFLKAYVDRQEPLAALLLLVHDADWVLHEFSDSDLQSFIQLLPREAHYTKKFLGCVAQSCRLGILLEG</sequence>
<gene>
    <name type="ordered locus">CT_474</name>
</gene>